<protein>
    <recommendedName>
        <fullName>Xaa-Pro aminopeptidase 1</fullName>
        <ecNumber evidence="2">3.4.11.9</ecNumber>
    </recommendedName>
    <alternativeName>
        <fullName>Aminoacylproline aminopeptidase</fullName>
    </alternativeName>
    <alternativeName>
        <fullName>Cytosolic aminopeptidase P</fullName>
    </alternativeName>
    <alternativeName>
        <fullName>Soluble aminopeptidase P</fullName>
        <shortName>sAmp</shortName>
    </alternativeName>
    <alternativeName>
        <fullName>X-Pro aminopeptidase 1</fullName>
    </alternativeName>
    <alternativeName>
        <fullName>X-prolyl aminopeptidase 1, soluble</fullName>
    </alternativeName>
</protein>
<keyword id="KW-0007">Acetylation</keyword>
<keyword id="KW-0031">Aminopeptidase</keyword>
<keyword id="KW-0963">Cytoplasm</keyword>
<keyword id="KW-0378">Hydrolase</keyword>
<keyword id="KW-0464">Manganese</keyword>
<keyword id="KW-0479">Metal-binding</keyword>
<keyword id="KW-0482">Metalloprotease</keyword>
<keyword id="KW-0645">Protease</keyword>
<keyword id="KW-1185">Reference proteome</keyword>
<evidence type="ECO:0000250" key="1">
    <source>
        <dbReference type="UniProtKB" id="O44750"/>
    </source>
</evidence>
<evidence type="ECO:0000250" key="2">
    <source>
        <dbReference type="UniProtKB" id="Q9NQW7"/>
    </source>
</evidence>
<evidence type="ECO:0000305" key="3"/>
<evidence type="ECO:0000312" key="4">
    <source>
        <dbReference type="EMBL" id="AAH65174.1"/>
    </source>
</evidence>
<evidence type="ECO:0000312" key="5">
    <source>
        <dbReference type="EMBL" id="AAK48945.1"/>
    </source>
</evidence>
<evidence type="ECO:0000312" key="6">
    <source>
        <dbReference type="MGI" id="MGI:2180003"/>
    </source>
</evidence>
<sequence>MAPKVTSELLRQLRQAMRNSEYVAEPIQAYIIPSGDAHQSEYIAPCDCRRAFVSGFDGSAGTAIITEEHAAMWTDGRYFLQAAKQMDNNWTLMKMGLKDTPTQEDWLVSVLPEGSRVGVDPLIIPTDYWKKMAKVLRSAGHHLVPVKENLVDKIWTDRPERPCKPLLTLGLDYTGISWKEKVADLRLKMAERSIAWFVVTALDEIAWLFNLRGSDVEHNPVFFSYAIVGLETIMLFIDGDRVDAPGVKQHLLLDLGLEAEYRIQVLPYKSILSELKALCADLSPREKVWVSDKASYAVSEAIPKDHRCCMPYTPICIAKAVKNSAESDGMRRAHIKDAVALCELFNWLEQEVPKGGVTEISAADKAEEFRRQQADFVDLSFPTISSTGPNGAIIHYAPVPETNRTLSLDEVYLIDSGAQYKDGTTDVTRTMHFGTPTAYEKECFTYVLKGHIAVSAAVFPTGTKGHLLDSFARSALWDSGLDYLHGTGHGVGSFLNVHEGPCGISYKTFSDEPLEAGMIVTDEPGYYEDGAFGIRIENVVLVVPAKTKYNFNNRGSLTFEPLTLVPIQTKMIDVNALTDKECDWLNSYHQTCRDVVGKELQSQGRQEALEWLIRETEPVSRQH</sequence>
<dbReference type="EC" id="3.4.11.9" evidence="2"/>
<dbReference type="EMBL" id="AF363970">
    <property type="protein sequence ID" value="AAK48945.1"/>
    <property type="molecule type" value="mRNA"/>
</dbReference>
<dbReference type="EMBL" id="BC065174">
    <property type="protein sequence ID" value="AAH65174.1"/>
    <property type="molecule type" value="mRNA"/>
</dbReference>
<dbReference type="CCDS" id="CCDS89415.1"/>
<dbReference type="RefSeq" id="NP_001361763.1">
    <property type="nucleotide sequence ID" value="NM_001374834.1"/>
</dbReference>
<dbReference type="RefSeq" id="NP_573479.3">
    <property type="nucleotide sequence ID" value="NM_133216.3"/>
</dbReference>
<dbReference type="RefSeq" id="XP_011245461.1">
    <property type="nucleotide sequence ID" value="XM_011247159.2"/>
</dbReference>
<dbReference type="RefSeq" id="XP_011245462.1">
    <property type="nucleotide sequence ID" value="XM_011247160.1"/>
</dbReference>
<dbReference type="SMR" id="Q6P1B1"/>
<dbReference type="BioGRID" id="228414">
    <property type="interactions" value="15"/>
</dbReference>
<dbReference type="FunCoup" id="Q6P1B1">
    <property type="interactions" value="2704"/>
</dbReference>
<dbReference type="IntAct" id="Q6P1B1">
    <property type="interactions" value="1"/>
</dbReference>
<dbReference type="MINT" id="Q6P1B1"/>
<dbReference type="STRING" id="10090.ENSMUSP00000138250"/>
<dbReference type="MEROPS" id="M24.009"/>
<dbReference type="GlyGen" id="Q6P1B1">
    <property type="glycosylation" value="1 site, 1 O-linked glycan (1 site)"/>
</dbReference>
<dbReference type="iPTMnet" id="Q6P1B1"/>
<dbReference type="PhosphoSitePlus" id="Q6P1B1"/>
<dbReference type="SwissPalm" id="Q6P1B1"/>
<dbReference type="jPOST" id="Q6P1B1"/>
<dbReference type="PaxDb" id="10090-ENSMUSP00000138250"/>
<dbReference type="ProteomicsDB" id="300010"/>
<dbReference type="Pumba" id="Q6P1B1"/>
<dbReference type="Antibodypedia" id="31645">
    <property type="antibodies" value="206 antibodies from 33 providers"/>
</dbReference>
<dbReference type="DNASU" id="170750"/>
<dbReference type="Ensembl" id="ENSMUST00000236058.2">
    <property type="protein sequence ID" value="ENSMUSP00000157689.2"/>
    <property type="gene ID" value="ENSMUSG00000025027.19"/>
</dbReference>
<dbReference type="Ensembl" id="ENSMUST00000237294.2">
    <property type="protein sequence ID" value="ENSMUSP00000158390.2"/>
    <property type="gene ID" value="ENSMUSG00000025027.19"/>
</dbReference>
<dbReference type="GeneID" id="170750"/>
<dbReference type="KEGG" id="mmu:170750"/>
<dbReference type="UCSC" id="uc008hwf.2">
    <property type="organism name" value="mouse"/>
</dbReference>
<dbReference type="AGR" id="MGI:2180003"/>
<dbReference type="CTD" id="7511"/>
<dbReference type="MGI" id="MGI:2180003">
    <property type="gene designation" value="Xpnpep1"/>
</dbReference>
<dbReference type="VEuPathDB" id="HostDB:ENSMUSG00000025027"/>
<dbReference type="eggNOG" id="KOG2413">
    <property type="taxonomic scope" value="Eukaryota"/>
</dbReference>
<dbReference type="GeneTree" id="ENSGT00940000157716"/>
<dbReference type="InParanoid" id="Q6P1B1"/>
<dbReference type="OMA" id="EPGMILS"/>
<dbReference type="OrthoDB" id="9995434at2759"/>
<dbReference type="PhylomeDB" id="Q6P1B1"/>
<dbReference type="TreeFam" id="TF314183"/>
<dbReference type="BioGRID-ORCS" id="170750">
    <property type="hits" value="2 hits in 76 CRISPR screens"/>
</dbReference>
<dbReference type="ChiTaRS" id="Xpnpep1">
    <property type="organism name" value="mouse"/>
</dbReference>
<dbReference type="PRO" id="PR:Q6P1B1"/>
<dbReference type="Proteomes" id="UP000000589">
    <property type="component" value="Chromosome 19"/>
</dbReference>
<dbReference type="RNAct" id="Q6P1B1">
    <property type="molecule type" value="protein"/>
</dbReference>
<dbReference type="Bgee" id="ENSMUSG00000025027">
    <property type="expression patterns" value="Expressed in gastrula and 263 other cell types or tissues"/>
</dbReference>
<dbReference type="ExpressionAtlas" id="Q6P1B1">
    <property type="expression patterns" value="baseline and differential"/>
</dbReference>
<dbReference type="GO" id="GO:0005737">
    <property type="term" value="C:cytoplasm"/>
    <property type="evidence" value="ECO:0000250"/>
    <property type="project" value="UniProtKB"/>
</dbReference>
<dbReference type="GO" id="GO:0005829">
    <property type="term" value="C:cytosol"/>
    <property type="evidence" value="ECO:0007669"/>
    <property type="project" value="UniProtKB-SubCell"/>
</dbReference>
<dbReference type="GO" id="GO:0004177">
    <property type="term" value="F:aminopeptidase activity"/>
    <property type="evidence" value="ECO:0000250"/>
    <property type="project" value="UniProtKB"/>
</dbReference>
<dbReference type="GO" id="GO:0030145">
    <property type="term" value="F:manganese ion binding"/>
    <property type="evidence" value="ECO:0000250"/>
    <property type="project" value="UniProtKB"/>
</dbReference>
<dbReference type="GO" id="GO:0070006">
    <property type="term" value="F:metalloaminopeptidase activity"/>
    <property type="evidence" value="ECO:0000250"/>
    <property type="project" value="UniProtKB"/>
</dbReference>
<dbReference type="GO" id="GO:0042803">
    <property type="term" value="F:protein homodimerization activity"/>
    <property type="evidence" value="ECO:0007669"/>
    <property type="project" value="Ensembl"/>
</dbReference>
<dbReference type="GO" id="GO:0010815">
    <property type="term" value="P:bradykinin catabolic process"/>
    <property type="evidence" value="ECO:0000250"/>
    <property type="project" value="UniProtKB"/>
</dbReference>
<dbReference type="GO" id="GO:0043069">
    <property type="term" value="P:negative regulation of programmed cell death"/>
    <property type="evidence" value="ECO:0000250"/>
    <property type="project" value="UniProtKB"/>
</dbReference>
<dbReference type="GO" id="GO:0006508">
    <property type="term" value="P:proteolysis"/>
    <property type="evidence" value="ECO:0000250"/>
    <property type="project" value="UniProtKB"/>
</dbReference>
<dbReference type="CDD" id="cd01085">
    <property type="entry name" value="APP"/>
    <property type="match status" value="1"/>
</dbReference>
<dbReference type="FunFam" id="3.40.350.10:FF:000001">
    <property type="entry name" value="Putative xaa-Pro aminopeptidase 1"/>
    <property type="match status" value="1"/>
</dbReference>
<dbReference type="FunFam" id="3.40.350.10:FF:000004">
    <property type="entry name" value="xaa-Pro aminopeptidase 1 isoform X1"/>
    <property type="match status" value="1"/>
</dbReference>
<dbReference type="FunFam" id="3.90.230.10:FF:000004">
    <property type="entry name" value="xaa-Pro aminopeptidase 1 isoform X1"/>
    <property type="match status" value="1"/>
</dbReference>
<dbReference type="Gene3D" id="3.90.230.10">
    <property type="entry name" value="Creatinase/methionine aminopeptidase superfamily"/>
    <property type="match status" value="1"/>
</dbReference>
<dbReference type="Gene3D" id="3.40.350.10">
    <property type="entry name" value="Creatinase/prolidase N-terminal domain"/>
    <property type="match status" value="2"/>
</dbReference>
<dbReference type="InterPro" id="IPR029149">
    <property type="entry name" value="Creatin/AminoP/Spt16_N"/>
</dbReference>
<dbReference type="InterPro" id="IPR036005">
    <property type="entry name" value="Creatinase/aminopeptidase-like"/>
</dbReference>
<dbReference type="InterPro" id="IPR000587">
    <property type="entry name" value="Creatinase_N"/>
</dbReference>
<dbReference type="InterPro" id="IPR000994">
    <property type="entry name" value="Pept_M24"/>
</dbReference>
<dbReference type="InterPro" id="IPR033740">
    <property type="entry name" value="Pept_M24B"/>
</dbReference>
<dbReference type="InterPro" id="IPR032416">
    <property type="entry name" value="Peptidase_M24_C"/>
</dbReference>
<dbReference type="InterPro" id="IPR001131">
    <property type="entry name" value="Peptidase_M24B_aminopep-P_CS"/>
</dbReference>
<dbReference type="InterPro" id="IPR050422">
    <property type="entry name" value="X-Pro_aminopeptidase_P"/>
</dbReference>
<dbReference type="PANTHER" id="PTHR43763">
    <property type="entry name" value="XAA-PRO AMINOPEPTIDASE 1"/>
    <property type="match status" value="1"/>
</dbReference>
<dbReference type="PANTHER" id="PTHR43763:SF6">
    <property type="entry name" value="XAA-PRO AMINOPEPTIDASE 1"/>
    <property type="match status" value="1"/>
</dbReference>
<dbReference type="Pfam" id="PF01321">
    <property type="entry name" value="Creatinase_N"/>
    <property type="match status" value="1"/>
</dbReference>
<dbReference type="Pfam" id="PF16189">
    <property type="entry name" value="Creatinase_N_2"/>
    <property type="match status" value="1"/>
</dbReference>
<dbReference type="Pfam" id="PF00557">
    <property type="entry name" value="Peptidase_M24"/>
    <property type="match status" value="1"/>
</dbReference>
<dbReference type="Pfam" id="PF16188">
    <property type="entry name" value="Peptidase_M24_C"/>
    <property type="match status" value="1"/>
</dbReference>
<dbReference type="SUPFAM" id="SSF55920">
    <property type="entry name" value="Creatinase/aminopeptidase"/>
    <property type="match status" value="1"/>
</dbReference>
<dbReference type="SUPFAM" id="SSF53092">
    <property type="entry name" value="Creatinase/prolidase N-terminal domain"/>
    <property type="match status" value="1"/>
</dbReference>
<dbReference type="PROSITE" id="PS00491">
    <property type="entry name" value="PROLINE_PEPTIDASE"/>
    <property type="match status" value="1"/>
</dbReference>
<feature type="chain" id="PRO_0000185084" description="Xaa-Pro aminopeptidase 1">
    <location>
        <begin position="1"/>
        <end position="623"/>
    </location>
</feature>
<feature type="binding site" evidence="1">
    <location>
        <position position="77"/>
    </location>
    <ligand>
        <name>a peptide</name>
        <dbReference type="ChEBI" id="CHEBI:60466"/>
    </ligand>
</feature>
<feature type="binding site" evidence="1">
    <location>
        <position position="395"/>
    </location>
    <ligand>
        <name>a peptide</name>
        <dbReference type="ChEBI" id="CHEBI:60466"/>
    </ligand>
</feature>
<feature type="binding site" evidence="2">
    <location>
        <position position="415"/>
    </location>
    <ligand>
        <name>Mn(2+)</name>
        <dbReference type="ChEBI" id="CHEBI:29035"/>
        <label>1</label>
    </ligand>
</feature>
<feature type="binding site" evidence="2">
    <location>
        <position position="426"/>
    </location>
    <ligand>
        <name>Mn(2+)</name>
        <dbReference type="ChEBI" id="CHEBI:29035"/>
        <label>1</label>
    </ligand>
</feature>
<feature type="binding site" evidence="2">
    <location>
        <position position="426"/>
    </location>
    <ligand>
        <name>Mn(2+)</name>
        <dbReference type="ChEBI" id="CHEBI:29035"/>
        <label>2</label>
    </ligand>
</feature>
<feature type="binding site" evidence="1">
    <location>
        <position position="489"/>
    </location>
    <ligand>
        <name>a peptide</name>
        <dbReference type="ChEBI" id="CHEBI:60466"/>
    </ligand>
</feature>
<feature type="binding site" evidence="2">
    <location>
        <position position="489"/>
    </location>
    <ligand>
        <name>Mn(2+)</name>
        <dbReference type="ChEBI" id="CHEBI:29035"/>
        <label>2</label>
    </ligand>
</feature>
<feature type="binding site" evidence="1">
    <location>
        <position position="498"/>
    </location>
    <ligand>
        <name>a peptide</name>
        <dbReference type="ChEBI" id="CHEBI:60466"/>
    </ligand>
</feature>
<feature type="binding site" evidence="1">
    <location>
        <position position="523"/>
    </location>
    <ligand>
        <name>a peptide</name>
        <dbReference type="ChEBI" id="CHEBI:60466"/>
    </ligand>
</feature>
<feature type="binding site" evidence="2">
    <location>
        <position position="523"/>
    </location>
    <ligand>
        <name>Mn(2+)</name>
        <dbReference type="ChEBI" id="CHEBI:29035"/>
        <label>2</label>
    </ligand>
</feature>
<feature type="binding site" evidence="2">
    <location>
        <position position="537"/>
    </location>
    <ligand>
        <name>Mn(2+)</name>
        <dbReference type="ChEBI" id="CHEBI:29035"/>
        <label>1</label>
    </ligand>
</feature>
<feature type="binding site" evidence="2">
    <location>
        <position position="537"/>
    </location>
    <ligand>
        <name>Mn(2+)</name>
        <dbReference type="ChEBI" id="CHEBI:29035"/>
        <label>2</label>
    </ligand>
</feature>
<feature type="modified residue" description="N6-acetyllysine" evidence="2">
    <location>
        <position position="304"/>
    </location>
</feature>
<feature type="sequence conflict" description="In Ref. 1; AAK48945." evidence="3" ref="1">
    <original>W</original>
    <variation>R</variation>
    <location>
        <position position="347"/>
    </location>
</feature>
<feature type="sequence conflict" description="In Ref. 1; AAK48945." evidence="3" ref="1">
    <original>A</original>
    <variation>T</variation>
    <location>
        <position position="457"/>
    </location>
</feature>
<feature type="sequence conflict" description="In Ref. 1; AAK48945." evidence="3" ref="1">
    <original>P</original>
    <variation>A</variation>
    <location>
        <position position="544"/>
    </location>
</feature>
<feature type="sequence conflict" description="In Ref. 1; AAK48945." evidence="3" ref="1">
    <original>N</original>
    <variation>T</variation>
    <location>
        <position position="552"/>
    </location>
</feature>
<feature type="sequence conflict" description="In Ref. 1; AAK48945." evidence="3" ref="1">
    <original>S</original>
    <variation>T</variation>
    <location>
        <position position="556"/>
    </location>
</feature>
<name>XPP1_MOUSE</name>
<comment type="function">
    <text evidence="2">Metalloaminopeptidase that catalyzes the removal of a penultimate prolyl residue from the N-termini of peptides, such as Arg-Pro-Pro. Contributes to the degradation of bradykinin.</text>
</comment>
<comment type="catalytic activity">
    <reaction evidence="2">
        <text>Release of any N-terminal amino acid, including proline, that is linked to proline, even from a dipeptide or tripeptide.</text>
        <dbReference type="EC" id="3.4.11.9"/>
    </reaction>
</comment>
<comment type="cofactor">
    <cofactor evidence="2">
        <name>Mn(2+)</name>
        <dbReference type="ChEBI" id="CHEBI:29035"/>
    </cofactor>
    <text evidence="2">Binds 2 manganese ions per subunit.</text>
</comment>
<comment type="subunit">
    <text evidence="2">Homodimer.</text>
</comment>
<comment type="subcellular location">
    <subcellularLocation>
        <location evidence="2">Cytoplasm</location>
        <location evidence="2">Cytosol</location>
    </subcellularLocation>
</comment>
<comment type="similarity">
    <text evidence="3">Belongs to the peptidase M24B family.</text>
</comment>
<organism>
    <name type="scientific">Mus musculus</name>
    <name type="common">Mouse</name>
    <dbReference type="NCBI Taxonomy" id="10090"/>
    <lineage>
        <taxon>Eukaryota</taxon>
        <taxon>Metazoa</taxon>
        <taxon>Chordata</taxon>
        <taxon>Craniata</taxon>
        <taxon>Vertebrata</taxon>
        <taxon>Euteleostomi</taxon>
        <taxon>Mammalia</taxon>
        <taxon>Eutheria</taxon>
        <taxon>Euarchontoglires</taxon>
        <taxon>Glires</taxon>
        <taxon>Rodentia</taxon>
        <taxon>Myomorpha</taxon>
        <taxon>Muroidea</taxon>
        <taxon>Muridae</taxon>
        <taxon>Murinae</taxon>
        <taxon>Mus</taxon>
        <taxon>Mus</taxon>
    </lineage>
</organism>
<reference evidence="3 5" key="1">
    <citation type="submission" date="2001-03" db="EMBL/GenBank/DDBJ databases">
        <title>Mouse soluble (cytosolic) aminopeptidase P.</title>
        <authorList>
            <person name="Ryan J.W."/>
            <person name="Bondarev I."/>
        </authorList>
    </citation>
    <scope>NUCLEOTIDE SEQUENCE [MRNA]</scope>
    <source>
        <tissue evidence="5">Liver</tissue>
    </source>
</reference>
<reference evidence="4" key="2">
    <citation type="journal article" date="2004" name="Genome Res.">
        <title>The status, quality, and expansion of the NIH full-length cDNA project: the Mammalian Gene Collection (MGC).</title>
        <authorList>
            <consortium name="The MGC Project Team"/>
        </authorList>
    </citation>
    <scope>NUCLEOTIDE SEQUENCE [LARGE SCALE MRNA]</scope>
    <source>
        <strain evidence="4">C57BL/6J</strain>
        <tissue evidence="4">Brain</tissue>
    </source>
</reference>
<reference key="3">
    <citation type="journal article" date="2010" name="Cell">
        <title>A tissue-specific atlas of mouse protein phosphorylation and expression.</title>
        <authorList>
            <person name="Huttlin E.L."/>
            <person name="Jedrychowski M.P."/>
            <person name="Elias J.E."/>
            <person name="Goswami T."/>
            <person name="Rad R."/>
            <person name="Beausoleil S.A."/>
            <person name="Villen J."/>
            <person name="Haas W."/>
            <person name="Sowa M.E."/>
            <person name="Gygi S.P."/>
        </authorList>
    </citation>
    <scope>IDENTIFICATION BY MASS SPECTROMETRY [LARGE SCALE ANALYSIS]</scope>
    <source>
        <tissue>Brain</tissue>
        <tissue>Brown adipose tissue</tissue>
        <tissue>Heart</tissue>
        <tissue>Kidney</tissue>
        <tissue>Liver</tissue>
        <tissue>Lung</tissue>
        <tissue>Pancreas</tissue>
        <tissue>Spleen</tissue>
        <tissue>Testis</tissue>
    </source>
</reference>
<gene>
    <name evidence="4 6" type="primary">Xpnpep1</name>
</gene>
<accession>Q6P1B1</accession>
<accession>Q91Y37</accession>
<proteinExistence type="evidence at protein level"/>